<reference key="1">
    <citation type="journal article" date="1986" name="Mol. Cell. Biol.">
        <title>Sequence and expression of the chicken beta 5- and beta 4-tubulin genes define a pair of divergent beta-tubulins with complementary patterns of expression.</title>
        <authorList>
            <person name="Sullivan K.F."/>
            <person name="Havercroft J.C."/>
            <person name="Machlin P.S."/>
            <person name="Cleveland D.W."/>
        </authorList>
    </citation>
    <scope>NUCLEOTIDE SEQUENCE [GENOMIC DNA]</scope>
</reference>
<feature type="chain" id="PRO_0000048267" description="Tubulin beta-5 chain">
    <location>
        <begin position="1"/>
        <end position="446"/>
    </location>
</feature>
<feature type="short sequence motif" description="MREI motif" evidence="2">
    <location>
        <begin position="1"/>
        <end position="4"/>
    </location>
</feature>
<feature type="binding site" evidence="4">
    <location>
        <position position="11"/>
    </location>
    <ligand>
        <name>GTP</name>
        <dbReference type="ChEBI" id="CHEBI:37565"/>
    </ligand>
</feature>
<feature type="binding site" evidence="3">
    <location>
        <position position="69"/>
    </location>
    <ligand>
        <name>GTP</name>
        <dbReference type="ChEBI" id="CHEBI:37565"/>
    </ligand>
</feature>
<feature type="binding site" evidence="3">
    <location>
        <position position="69"/>
    </location>
    <ligand>
        <name>Mg(2+)</name>
        <dbReference type="ChEBI" id="CHEBI:18420"/>
    </ligand>
</feature>
<feature type="binding site" evidence="4">
    <location>
        <position position="138"/>
    </location>
    <ligand>
        <name>GTP</name>
        <dbReference type="ChEBI" id="CHEBI:37565"/>
    </ligand>
</feature>
<feature type="binding site" evidence="4">
    <location>
        <position position="142"/>
    </location>
    <ligand>
        <name>GTP</name>
        <dbReference type="ChEBI" id="CHEBI:37565"/>
    </ligand>
</feature>
<feature type="binding site" evidence="4">
    <location>
        <position position="143"/>
    </location>
    <ligand>
        <name>GTP</name>
        <dbReference type="ChEBI" id="CHEBI:37565"/>
    </ligand>
</feature>
<feature type="binding site" evidence="4">
    <location>
        <position position="144"/>
    </location>
    <ligand>
        <name>GTP</name>
        <dbReference type="ChEBI" id="CHEBI:37565"/>
    </ligand>
</feature>
<feature type="binding site" evidence="4">
    <location>
        <position position="204"/>
    </location>
    <ligand>
        <name>GTP</name>
        <dbReference type="ChEBI" id="CHEBI:37565"/>
    </ligand>
</feature>
<feature type="binding site" evidence="4">
    <location>
        <position position="226"/>
    </location>
    <ligand>
        <name>GTP</name>
        <dbReference type="ChEBI" id="CHEBI:37565"/>
    </ligand>
</feature>
<feature type="modified residue" description="5-glutamyl polyglutamate" evidence="5">
    <location>
        <position position="438"/>
    </location>
</feature>
<evidence type="ECO:0000250" key="1">
    <source>
        <dbReference type="UniProtKB" id="A2AQ07"/>
    </source>
</evidence>
<evidence type="ECO:0000250" key="2">
    <source>
        <dbReference type="UniProtKB" id="P07437"/>
    </source>
</evidence>
<evidence type="ECO:0000250" key="3">
    <source>
        <dbReference type="UniProtKB" id="P68363"/>
    </source>
</evidence>
<evidence type="ECO:0000250" key="4">
    <source>
        <dbReference type="UniProtKB" id="Q13509"/>
    </source>
</evidence>
<evidence type="ECO:0000250" key="5">
    <source>
        <dbReference type="UniProtKB" id="Q2T9S0"/>
    </source>
</evidence>
<evidence type="ECO:0000250" key="6">
    <source>
        <dbReference type="UniProtKB" id="Q71U36"/>
    </source>
</evidence>
<evidence type="ECO:0000305" key="7"/>
<protein>
    <recommendedName>
        <fullName>Tubulin beta-5 chain</fullName>
    </recommendedName>
    <alternativeName>
        <fullName>Beta-tubulin class-V</fullName>
    </alternativeName>
</protein>
<dbReference type="EMBL" id="L29435">
    <property type="protein sequence ID" value="AAA49126.1"/>
    <property type="molecule type" value="Genomic_DNA"/>
</dbReference>
<dbReference type="EMBL" id="M14681">
    <property type="protein sequence ID" value="AAA49126.1"/>
    <property type="status" value="JOINED"/>
    <property type="molecule type" value="Genomic_DNA"/>
</dbReference>
<dbReference type="EMBL" id="M14682">
    <property type="protein sequence ID" value="AAA49126.1"/>
    <property type="status" value="JOINED"/>
    <property type="molecule type" value="Genomic_DNA"/>
</dbReference>
<dbReference type="PIR" id="B27554">
    <property type="entry name" value="B27554"/>
</dbReference>
<dbReference type="RefSeq" id="NP_001026183.1">
    <property type="nucleotide sequence ID" value="NM_001031012.2"/>
</dbReference>
<dbReference type="SMR" id="P09653"/>
<dbReference type="FunCoup" id="P09653">
    <property type="interactions" value="1535"/>
</dbReference>
<dbReference type="STRING" id="9031.ENSGALP00000055967"/>
<dbReference type="PaxDb" id="9031-ENSGALP00000042665"/>
<dbReference type="GeneID" id="421037"/>
<dbReference type="KEGG" id="gga:421037"/>
<dbReference type="CTD" id="84617"/>
<dbReference type="VEuPathDB" id="HostDB:geneid_421037"/>
<dbReference type="eggNOG" id="KOG1375">
    <property type="taxonomic scope" value="Eukaryota"/>
</dbReference>
<dbReference type="HOGENOM" id="CLU_015718_1_1_1"/>
<dbReference type="InParanoid" id="P09653"/>
<dbReference type="OrthoDB" id="1662883at2759"/>
<dbReference type="PhylomeDB" id="P09653"/>
<dbReference type="Reactome" id="R-GGA-2467813">
    <property type="pathway name" value="Separation of Sister Chromatids"/>
</dbReference>
<dbReference type="Reactome" id="R-GGA-2500257">
    <property type="pathway name" value="Resolution of Sister Chromatid Cohesion"/>
</dbReference>
<dbReference type="Reactome" id="R-GGA-3371497">
    <property type="pathway name" value="HSP90 chaperone cycle for steroid hormone receptors (SHR) in the presence of ligand"/>
</dbReference>
<dbReference type="Reactome" id="R-GGA-5620924">
    <property type="pathway name" value="Intraflagellar transport"/>
</dbReference>
<dbReference type="Reactome" id="R-GGA-6807878">
    <property type="pathway name" value="COPI-mediated anterograde transport"/>
</dbReference>
<dbReference type="Reactome" id="R-GGA-6811434">
    <property type="pathway name" value="COPI-dependent Golgi-to-ER retrograde traffic"/>
</dbReference>
<dbReference type="Reactome" id="R-GGA-6811436">
    <property type="pathway name" value="COPI-independent Golgi-to-ER retrograde traffic"/>
</dbReference>
<dbReference type="Reactome" id="R-GGA-9646399">
    <property type="pathway name" value="Aggrephagy"/>
</dbReference>
<dbReference type="Reactome" id="R-GGA-9648025">
    <property type="pathway name" value="EML4 and NUDC in mitotic spindle formation"/>
</dbReference>
<dbReference type="Reactome" id="R-GGA-983189">
    <property type="pathway name" value="Kinesins"/>
</dbReference>
<dbReference type="PRO" id="PR:P09653"/>
<dbReference type="Proteomes" id="UP000000539">
    <property type="component" value="Chromosome 2"/>
</dbReference>
<dbReference type="Bgee" id="ENSGALG00000031275">
    <property type="expression patterns" value="Expressed in spermatocyte and 12 other cell types or tissues"/>
</dbReference>
<dbReference type="GO" id="GO:0005737">
    <property type="term" value="C:cytoplasm"/>
    <property type="evidence" value="ECO:0000318"/>
    <property type="project" value="GO_Central"/>
</dbReference>
<dbReference type="GO" id="GO:0005874">
    <property type="term" value="C:microtubule"/>
    <property type="evidence" value="ECO:0000318"/>
    <property type="project" value="GO_Central"/>
</dbReference>
<dbReference type="GO" id="GO:0005525">
    <property type="term" value="F:GTP binding"/>
    <property type="evidence" value="ECO:0000318"/>
    <property type="project" value="GO_Central"/>
</dbReference>
<dbReference type="GO" id="GO:0003924">
    <property type="term" value="F:GTPase activity"/>
    <property type="evidence" value="ECO:0007669"/>
    <property type="project" value="InterPro"/>
</dbReference>
<dbReference type="GO" id="GO:0046872">
    <property type="term" value="F:metal ion binding"/>
    <property type="evidence" value="ECO:0007669"/>
    <property type="project" value="UniProtKB-KW"/>
</dbReference>
<dbReference type="GO" id="GO:0005200">
    <property type="term" value="F:structural constituent of cytoskeleton"/>
    <property type="evidence" value="ECO:0000318"/>
    <property type="project" value="GO_Central"/>
</dbReference>
<dbReference type="GO" id="GO:0000226">
    <property type="term" value="P:microtubule cytoskeleton organization"/>
    <property type="evidence" value="ECO:0000318"/>
    <property type="project" value="GO_Central"/>
</dbReference>
<dbReference type="GO" id="GO:0000278">
    <property type="term" value="P:mitotic cell cycle"/>
    <property type="evidence" value="ECO:0000318"/>
    <property type="project" value="GO_Central"/>
</dbReference>
<dbReference type="CDD" id="cd02187">
    <property type="entry name" value="beta_tubulin"/>
    <property type="match status" value="1"/>
</dbReference>
<dbReference type="FunFam" id="1.10.287.600:FF:000002">
    <property type="entry name" value="Tubulin beta chain"/>
    <property type="match status" value="1"/>
</dbReference>
<dbReference type="FunFam" id="3.30.1330.20:FF:000002">
    <property type="entry name" value="Tubulin beta chain"/>
    <property type="match status" value="1"/>
</dbReference>
<dbReference type="FunFam" id="3.40.50.1440:FF:000003">
    <property type="entry name" value="Tubulin beta chain"/>
    <property type="match status" value="1"/>
</dbReference>
<dbReference type="Gene3D" id="1.10.287.600">
    <property type="entry name" value="Helix hairpin bin"/>
    <property type="match status" value="1"/>
</dbReference>
<dbReference type="Gene3D" id="3.30.1330.20">
    <property type="entry name" value="Tubulin/FtsZ, C-terminal domain"/>
    <property type="match status" value="1"/>
</dbReference>
<dbReference type="Gene3D" id="3.40.50.1440">
    <property type="entry name" value="Tubulin/FtsZ, GTPase domain"/>
    <property type="match status" value="1"/>
</dbReference>
<dbReference type="InterPro" id="IPR013838">
    <property type="entry name" value="Beta-tubulin_BS"/>
</dbReference>
<dbReference type="InterPro" id="IPR002453">
    <property type="entry name" value="Beta_tubulin"/>
</dbReference>
<dbReference type="InterPro" id="IPR008280">
    <property type="entry name" value="Tub_FtsZ_C"/>
</dbReference>
<dbReference type="InterPro" id="IPR000217">
    <property type="entry name" value="Tubulin"/>
</dbReference>
<dbReference type="InterPro" id="IPR037103">
    <property type="entry name" value="Tubulin/FtsZ-like_C"/>
</dbReference>
<dbReference type="InterPro" id="IPR018316">
    <property type="entry name" value="Tubulin/FtsZ_2-layer-sand-dom"/>
</dbReference>
<dbReference type="InterPro" id="IPR036525">
    <property type="entry name" value="Tubulin/FtsZ_GTPase_sf"/>
</dbReference>
<dbReference type="InterPro" id="IPR023123">
    <property type="entry name" value="Tubulin_C"/>
</dbReference>
<dbReference type="InterPro" id="IPR017975">
    <property type="entry name" value="Tubulin_CS"/>
</dbReference>
<dbReference type="InterPro" id="IPR003008">
    <property type="entry name" value="Tubulin_FtsZ_GTPase"/>
</dbReference>
<dbReference type="PANTHER" id="PTHR11588">
    <property type="entry name" value="TUBULIN"/>
    <property type="match status" value="1"/>
</dbReference>
<dbReference type="Pfam" id="PF00091">
    <property type="entry name" value="Tubulin"/>
    <property type="match status" value="1"/>
</dbReference>
<dbReference type="Pfam" id="PF03953">
    <property type="entry name" value="Tubulin_C"/>
    <property type="match status" value="1"/>
</dbReference>
<dbReference type="PRINTS" id="PR01163">
    <property type="entry name" value="BETATUBULIN"/>
</dbReference>
<dbReference type="PRINTS" id="PR01161">
    <property type="entry name" value="TUBULIN"/>
</dbReference>
<dbReference type="SMART" id="SM00864">
    <property type="entry name" value="Tubulin"/>
    <property type="match status" value="1"/>
</dbReference>
<dbReference type="SMART" id="SM00865">
    <property type="entry name" value="Tubulin_C"/>
    <property type="match status" value="1"/>
</dbReference>
<dbReference type="SUPFAM" id="SSF55307">
    <property type="entry name" value="Tubulin C-terminal domain-like"/>
    <property type="match status" value="1"/>
</dbReference>
<dbReference type="SUPFAM" id="SSF52490">
    <property type="entry name" value="Tubulin nucleotide-binding domain-like"/>
    <property type="match status" value="1"/>
</dbReference>
<dbReference type="PROSITE" id="PS00227">
    <property type="entry name" value="TUBULIN"/>
    <property type="match status" value="1"/>
</dbReference>
<dbReference type="PROSITE" id="PS00228">
    <property type="entry name" value="TUBULIN_B_AUTOREG"/>
    <property type="match status" value="1"/>
</dbReference>
<organism>
    <name type="scientific">Gallus gallus</name>
    <name type="common">Chicken</name>
    <dbReference type="NCBI Taxonomy" id="9031"/>
    <lineage>
        <taxon>Eukaryota</taxon>
        <taxon>Metazoa</taxon>
        <taxon>Chordata</taxon>
        <taxon>Craniata</taxon>
        <taxon>Vertebrata</taxon>
        <taxon>Euteleostomi</taxon>
        <taxon>Archelosauria</taxon>
        <taxon>Archosauria</taxon>
        <taxon>Dinosauria</taxon>
        <taxon>Saurischia</taxon>
        <taxon>Theropoda</taxon>
        <taxon>Coelurosauria</taxon>
        <taxon>Aves</taxon>
        <taxon>Neognathae</taxon>
        <taxon>Galloanserae</taxon>
        <taxon>Galliformes</taxon>
        <taxon>Phasianidae</taxon>
        <taxon>Phasianinae</taxon>
        <taxon>Gallus</taxon>
    </lineage>
</organism>
<accession>P09653</accession>
<keyword id="KW-0963">Cytoplasm</keyword>
<keyword id="KW-0206">Cytoskeleton</keyword>
<keyword id="KW-0342">GTP-binding</keyword>
<keyword id="KW-1017">Isopeptide bond</keyword>
<keyword id="KW-0460">Magnesium</keyword>
<keyword id="KW-0479">Metal-binding</keyword>
<keyword id="KW-0493">Microtubule</keyword>
<keyword id="KW-0547">Nucleotide-binding</keyword>
<keyword id="KW-1185">Reference proteome</keyword>
<proteinExistence type="inferred from homology"/>
<sequence>MREIVHIQAGQCGNQIGTKFWEVISDEHGIDPAGGYVGDSALQLERINVYYNESSSQKYVPRAVLVDLEPGTMDSVRSGPFGQLFRPDNFIFGQTGAGNNWAKGHYTEGAELVDSVLDVVRKECEHCDCLQGFQLTHSLGGGTGSGMGTLLISKIREEYPDRIMNTFSVMPSPKVSDTVVEPYNATLSVHQLVENTDETYCIDNEALYDICFRTLKLTTPTYGDLNHLVSATMSGVTTSLRFPGQLNADLRKLAVNMVPFPRLHFFMPGFAPLTARGSQQYRALTVPELTQQMFDAKNMMAACDPRHGRYLTVATVFRGPMSMKEVDEQMLAIQNKNSSYFVEWIPNNVKVAVCDIPPRGLKMASTFIGNSTAIQELFKRISEQFSAMFRRKAFLHWFTGEGMDEMEFTEAESNMNDLVSEYQQYQEATANDGEEAFEDDEEEINE</sequence>
<name>TBB5_CHICK</name>
<comment type="function">
    <text>Tubulin is the major constituent of microtubules, a cylinder consisting of laterally associated linear protofilaments composed of alpha- and beta-tubulin heterodimers. Microtubules grow by the addition of GTP-tubulin dimers to the microtubule end, where a stabilizing cap forms. Below the cap, tubulin dimers are in GDP-bound state, owing to GTPase activity of alpha-tubulin.</text>
</comment>
<comment type="cofactor">
    <cofactor evidence="3">
        <name>Mg(2+)</name>
        <dbReference type="ChEBI" id="CHEBI:18420"/>
    </cofactor>
</comment>
<comment type="subunit">
    <text>Dimer of alpha and beta chains. A typical microtubule is a hollow water-filled tube with an outer diameter of 25 nm and an inner diameter of 15 nM. Alpha-beta heterodimers associate head-to-tail to form protofilaments running lengthwise along the microtubule wall with the beta-tubulin subunit facing the microtubule plus end conferring a structural polarity. Microtubules usually have 13 protofilaments but different protofilament numbers can be found in some organisms and specialized cells.</text>
</comment>
<comment type="subcellular location">
    <subcellularLocation>
        <location>Cytoplasm</location>
        <location>Cytoskeleton</location>
    </subcellularLocation>
</comment>
<comment type="domain">
    <text evidence="2">The MREI motif is common among all beta-tubulin isoforms and may be critical for tubulin autoregulation.</text>
</comment>
<comment type="PTM">
    <text evidence="1">Some glutamate residues at the C-terminus are polyglycylated, resulting in polyglycine chains on the gamma-carboxyl group. Glycylation is mainly limited to tubulin incorporated into axonemes (cilia and flagella) whereas glutamylation is prevalent in neuronal cells, centrioles, axonemes, and the mitotic spindle. Both modifications can coexist on the same protein on adjacent residues, and lowering polyglycylation levels increases polyglutamylation, and reciprocally. The precise function of polyglycylation is still unclear.</text>
</comment>
<comment type="PTM">
    <text evidence="1 6">Some glutamate residues at the C-terminus are polyglutamylated, resulting in polyglutamate chains on the gamma-carboxyl group (By similarity). Polyglutamylation plays a key role in microtubule severing by spastin (SPAST). SPAST preferentially recognizes and acts on microtubules decorated with short polyglutamate tails: severing activity by SPAST increases as the number of glutamates per tubulin rises from one to eight, but decreases beyond this glutamylation threshold (By similarity).</text>
</comment>
<comment type="similarity">
    <text evidence="7">Belongs to the tubulin family.</text>
</comment>